<keyword id="KW-0479">Metal-binding</keyword>
<keyword id="KW-1267">Proteomics identification</keyword>
<keyword id="KW-1185">Reference proteome</keyword>
<keyword id="KW-0862">Zinc</keyword>
<keyword id="KW-0863">Zinc-finger</keyword>
<sequence length="993" mass="109806">MAMNFGDHASGFRHDDVIRFINNEVLRNGGSPAFYTAFRSRPWNEVEDRLRAIVADPRVPRAIKRACTWSALALSVQVAARQQEELLYQVWWLQGHVEECQATSWALTSQLQQLRLEHEEVATQLHLTQAALQQVLNERDGLCGRLLEVERSMQVYPMPQDFVPGPEAGQYGPVAGTLNAEQSEAVATEAQGMPHSEAQVAAPTAVYYMPEPQSGRVQGMQPLLLMQAPHPVPFHMPSPMGLPYSTPLPPPVVMESAAAIAPQMPPAGIYPPGLWATVGSQEETAPPWDQKCHGQDGYPENFQGVYHPGDNRSCNQKEGSECPQGMTSQGDSSSHSLKKDPVMQEGTAPPEFSRSHSLEKKPVMPKEMVPLGDSNSHSLKKDPVVPKEIVPIGDSNSHSLTKNPVVHKEMVSLGDSNSHSMKKDPVMPQKMVPLGDSNSHSLKKDPMMCQEMVPLGDSNSHSLKKDPVVAQGTAPLMYSRRHSQKKVPMMPKEMVPLGESHSHSLKKDLVVPKELVPLGDSKSHRMKKDPVMPQKMVPLGDSRSHSLKKDPVMPQNMIPLEDSNSHSLKKDPVMPQNMIPLEDSNSHSLKKDPMMHQEMVPLGDSNSHSLKKDPVVPQDTAPLMFSRRHSLKKVPVMPKEMVPLGDSHSLKKDPVMPQNMVPLEDSNSHSLKKDPVVPQGTAPLMFSRRHSLKKVPVMPKEMVPLGDSNSHSLKKDPVVPQGTAPLMFSRRHSLKKVPVMPKEMVPLGDSHSLKKDPVMPQNMVPLEDSNSHSLKKDPVVPQGTAPLTFSRRHSLKKVPVVPQGTASLGFSRIHSLKKELVMPEEMVPLGDSNSHSMKKDLVMPKEMVPLGDSNSHSLKKDPVVHQEVVSLGDSNSHSLKKHPVIPQGTASLRFSKSHSQKEDQERPQVTPLEDSKSHGVKNSPWKHQPQGQKVKEQKRKKASESQQQKPASCSSPVNWACPWCNAMNFPRNKVCSKCKRVRMPVENGSVDPA</sequence>
<reference key="1">
    <citation type="journal article" date="2005" name="Nature">
        <title>The DNA sequence of the human X chromosome.</title>
        <authorList>
            <person name="Ross M.T."/>
            <person name="Grafham D.V."/>
            <person name="Coffey A.J."/>
            <person name="Scherer S."/>
            <person name="McLay K."/>
            <person name="Muzny D."/>
            <person name="Platzer M."/>
            <person name="Howell G.R."/>
            <person name="Burrows C."/>
            <person name="Bird C.P."/>
            <person name="Frankish A."/>
            <person name="Lovell F.L."/>
            <person name="Howe K.L."/>
            <person name="Ashurst J.L."/>
            <person name="Fulton R.S."/>
            <person name="Sudbrak R."/>
            <person name="Wen G."/>
            <person name="Jones M.C."/>
            <person name="Hurles M.E."/>
            <person name="Andrews T.D."/>
            <person name="Scott C.E."/>
            <person name="Searle S."/>
            <person name="Ramser J."/>
            <person name="Whittaker A."/>
            <person name="Deadman R."/>
            <person name="Carter N.P."/>
            <person name="Hunt S.E."/>
            <person name="Chen R."/>
            <person name="Cree A."/>
            <person name="Gunaratne P."/>
            <person name="Havlak P."/>
            <person name="Hodgson A."/>
            <person name="Metzker M.L."/>
            <person name="Richards S."/>
            <person name="Scott G."/>
            <person name="Steffen D."/>
            <person name="Sodergren E."/>
            <person name="Wheeler D.A."/>
            <person name="Worley K.C."/>
            <person name="Ainscough R."/>
            <person name="Ambrose K.D."/>
            <person name="Ansari-Lari M.A."/>
            <person name="Aradhya S."/>
            <person name="Ashwell R.I."/>
            <person name="Babbage A.K."/>
            <person name="Bagguley C.L."/>
            <person name="Ballabio A."/>
            <person name="Banerjee R."/>
            <person name="Barker G.E."/>
            <person name="Barlow K.F."/>
            <person name="Barrett I.P."/>
            <person name="Bates K.N."/>
            <person name="Beare D.M."/>
            <person name="Beasley H."/>
            <person name="Beasley O."/>
            <person name="Beck A."/>
            <person name="Bethel G."/>
            <person name="Blechschmidt K."/>
            <person name="Brady N."/>
            <person name="Bray-Allen S."/>
            <person name="Bridgeman A.M."/>
            <person name="Brown A.J."/>
            <person name="Brown M.J."/>
            <person name="Bonnin D."/>
            <person name="Bruford E.A."/>
            <person name="Buhay C."/>
            <person name="Burch P."/>
            <person name="Burford D."/>
            <person name="Burgess J."/>
            <person name="Burrill W."/>
            <person name="Burton J."/>
            <person name="Bye J.M."/>
            <person name="Carder C."/>
            <person name="Carrel L."/>
            <person name="Chako J."/>
            <person name="Chapman J.C."/>
            <person name="Chavez D."/>
            <person name="Chen E."/>
            <person name="Chen G."/>
            <person name="Chen Y."/>
            <person name="Chen Z."/>
            <person name="Chinault C."/>
            <person name="Ciccodicola A."/>
            <person name="Clark S.Y."/>
            <person name="Clarke G."/>
            <person name="Clee C.M."/>
            <person name="Clegg S."/>
            <person name="Clerc-Blankenburg K."/>
            <person name="Clifford K."/>
            <person name="Cobley V."/>
            <person name="Cole C.G."/>
            <person name="Conquer J.S."/>
            <person name="Corby N."/>
            <person name="Connor R.E."/>
            <person name="David R."/>
            <person name="Davies J."/>
            <person name="Davis C."/>
            <person name="Davis J."/>
            <person name="Delgado O."/>
            <person name="Deshazo D."/>
            <person name="Dhami P."/>
            <person name="Ding Y."/>
            <person name="Dinh H."/>
            <person name="Dodsworth S."/>
            <person name="Draper H."/>
            <person name="Dugan-Rocha S."/>
            <person name="Dunham A."/>
            <person name="Dunn M."/>
            <person name="Durbin K.J."/>
            <person name="Dutta I."/>
            <person name="Eades T."/>
            <person name="Ellwood M."/>
            <person name="Emery-Cohen A."/>
            <person name="Errington H."/>
            <person name="Evans K.L."/>
            <person name="Faulkner L."/>
            <person name="Francis F."/>
            <person name="Frankland J."/>
            <person name="Fraser A.E."/>
            <person name="Galgoczy P."/>
            <person name="Gilbert J."/>
            <person name="Gill R."/>
            <person name="Gloeckner G."/>
            <person name="Gregory S.G."/>
            <person name="Gribble S."/>
            <person name="Griffiths C."/>
            <person name="Grocock R."/>
            <person name="Gu Y."/>
            <person name="Gwilliam R."/>
            <person name="Hamilton C."/>
            <person name="Hart E.A."/>
            <person name="Hawes A."/>
            <person name="Heath P.D."/>
            <person name="Heitmann K."/>
            <person name="Hennig S."/>
            <person name="Hernandez J."/>
            <person name="Hinzmann B."/>
            <person name="Ho S."/>
            <person name="Hoffs M."/>
            <person name="Howden P.J."/>
            <person name="Huckle E.J."/>
            <person name="Hume J."/>
            <person name="Hunt P.J."/>
            <person name="Hunt A.R."/>
            <person name="Isherwood J."/>
            <person name="Jacob L."/>
            <person name="Johnson D."/>
            <person name="Jones S."/>
            <person name="de Jong P.J."/>
            <person name="Joseph S.S."/>
            <person name="Keenan S."/>
            <person name="Kelly S."/>
            <person name="Kershaw J.K."/>
            <person name="Khan Z."/>
            <person name="Kioschis P."/>
            <person name="Klages S."/>
            <person name="Knights A.J."/>
            <person name="Kosiura A."/>
            <person name="Kovar-Smith C."/>
            <person name="Laird G.K."/>
            <person name="Langford C."/>
            <person name="Lawlor S."/>
            <person name="Leversha M."/>
            <person name="Lewis L."/>
            <person name="Liu W."/>
            <person name="Lloyd C."/>
            <person name="Lloyd D.M."/>
            <person name="Loulseged H."/>
            <person name="Loveland J.E."/>
            <person name="Lovell J.D."/>
            <person name="Lozado R."/>
            <person name="Lu J."/>
            <person name="Lyne R."/>
            <person name="Ma J."/>
            <person name="Maheshwari M."/>
            <person name="Matthews L.H."/>
            <person name="McDowall J."/>
            <person name="McLaren S."/>
            <person name="McMurray A."/>
            <person name="Meidl P."/>
            <person name="Meitinger T."/>
            <person name="Milne S."/>
            <person name="Miner G."/>
            <person name="Mistry S.L."/>
            <person name="Morgan M."/>
            <person name="Morris S."/>
            <person name="Mueller I."/>
            <person name="Mullikin J.C."/>
            <person name="Nguyen N."/>
            <person name="Nordsiek G."/>
            <person name="Nyakatura G."/>
            <person name="O'dell C.N."/>
            <person name="Okwuonu G."/>
            <person name="Palmer S."/>
            <person name="Pandian R."/>
            <person name="Parker D."/>
            <person name="Parrish J."/>
            <person name="Pasternak S."/>
            <person name="Patel D."/>
            <person name="Pearce A.V."/>
            <person name="Pearson D.M."/>
            <person name="Pelan S.E."/>
            <person name="Perez L."/>
            <person name="Porter K.M."/>
            <person name="Ramsey Y."/>
            <person name="Reichwald K."/>
            <person name="Rhodes S."/>
            <person name="Ridler K.A."/>
            <person name="Schlessinger D."/>
            <person name="Schueler M.G."/>
            <person name="Sehra H.K."/>
            <person name="Shaw-Smith C."/>
            <person name="Shen H."/>
            <person name="Sheridan E.M."/>
            <person name="Shownkeen R."/>
            <person name="Skuce C.D."/>
            <person name="Smith M.L."/>
            <person name="Sotheran E.C."/>
            <person name="Steingruber H.E."/>
            <person name="Steward C.A."/>
            <person name="Storey R."/>
            <person name="Swann R.M."/>
            <person name="Swarbreck D."/>
            <person name="Tabor P.E."/>
            <person name="Taudien S."/>
            <person name="Taylor T."/>
            <person name="Teague B."/>
            <person name="Thomas K."/>
            <person name="Thorpe A."/>
            <person name="Timms K."/>
            <person name="Tracey A."/>
            <person name="Trevanion S."/>
            <person name="Tromans A.C."/>
            <person name="d'Urso M."/>
            <person name="Verduzco D."/>
            <person name="Villasana D."/>
            <person name="Waldron L."/>
            <person name="Wall M."/>
            <person name="Wang Q."/>
            <person name="Warren J."/>
            <person name="Warry G.L."/>
            <person name="Wei X."/>
            <person name="West A."/>
            <person name="Whitehead S.L."/>
            <person name="Whiteley M.N."/>
            <person name="Wilkinson J.E."/>
            <person name="Willey D.L."/>
            <person name="Williams G."/>
            <person name="Williams L."/>
            <person name="Williamson A."/>
            <person name="Williamson H."/>
            <person name="Wilming L."/>
            <person name="Woodmansey R.L."/>
            <person name="Wray P.W."/>
            <person name="Yen J."/>
            <person name="Zhang J."/>
            <person name="Zhou J."/>
            <person name="Zoghbi H."/>
            <person name="Zorilla S."/>
            <person name="Buck D."/>
            <person name="Reinhardt R."/>
            <person name="Poustka A."/>
            <person name="Rosenthal A."/>
            <person name="Lehrach H."/>
            <person name="Meindl A."/>
            <person name="Minx P.J."/>
            <person name="Hillier L.W."/>
            <person name="Willard H.F."/>
            <person name="Wilson R.K."/>
            <person name="Waterston R.H."/>
            <person name="Rice C.M."/>
            <person name="Vaudin M."/>
            <person name="Coulson A."/>
            <person name="Nelson D.L."/>
            <person name="Weinstock G."/>
            <person name="Sulston J.E."/>
            <person name="Durbin R.M."/>
            <person name="Hubbard T."/>
            <person name="Gibbs R.A."/>
            <person name="Beck S."/>
            <person name="Rogers J."/>
            <person name="Bentley D.R."/>
        </authorList>
    </citation>
    <scope>NUCLEOTIDE SEQUENCE [LARGE SCALE GENOMIC DNA]</scope>
</reference>
<reference key="2">
    <citation type="submission" date="2005-09" db="EMBL/GenBank/DDBJ databases">
        <authorList>
            <person name="Mural R.J."/>
            <person name="Istrail S."/>
            <person name="Sutton G.G."/>
            <person name="Florea L."/>
            <person name="Halpern A.L."/>
            <person name="Mobarry C.M."/>
            <person name="Lippert R."/>
            <person name="Walenz B."/>
            <person name="Shatkay H."/>
            <person name="Dew I."/>
            <person name="Miller J.R."/>
            <person name="Flanigan M.J."/>
            <person name="Edwards N.J."/>
            <person name="Bolanos R."/>
            <person name="Fasulo D."/>
            <person name="Halldorsson B.V."/>
            <person name="Hannenhalli S."/>
            <person name="Turner R."/>
            <person name="Yooseph S."/>
            <person name="Lu F."/>
            <person name="Nusskern D.R."/>
            <person name="Shue B.C."/>
            <person name="Zheng X.H."/>
            <person name="Zhong F."/>
            <person name="Delcher A.L."/>
            <person name="Huson D.H."/>
            <person name="Kravitz S.A."/>
            <person name="Mouchard L."/>
            <person name="Reinert K."/>
            <person name="Remington K.A."/>
            <person name="Clark A.G."/>
            <person name="Waterman M.S."/>
            <person name="Eichler E.E."/>
            <person name="Adams M.D."/>
            <person name="Hunkapiller M.W."/>
            <person name="Myers E.W."/>
            <person name="Venter J.C."/>
        </authorList>
    </citation>
    <scope>NUCLEOTIDE SEQUENCE [LARGE SCALE GENOMIC DNA]</scope>
</reference>
<name>TX13C_HUMAN</name>
<dbReference type="EMBL" id="AL627231">
    <property type="status" value="NOT_ANNOTATED_CDS"/>
    <property type="molecule type" value="Genomic_DNA"/>
</dbReference>
<dbReference type="EMBL" id="CH471107">
    <property type="protein sequence ID" value="EAX11844.1"/>
    <property type="molecule type" value="Genomic_DNA"/>
</dbReference>
<dbReference type="CCDS" id="CCDS83488.1"/>
<dbReference type="RefSeq" id="NP_001182201.1">
    <property type="nucleotide sequence ID" value="NM_001195272.2"/>
</dbReference>
<dbReference type="RefSeq" id="XP_005262409.1">
    <property type="nucleotide sequence ID" value="XM_005262352.3"/>
</dbReference>
<dbReference type="SMR" id="A0A0J9YWL9"/>
<dbReference type="STRING" id="9606.ENSP00000488022"/>
<dbReference type="GlyGen" id="A0A0J9YWL9">
    <property type="glycosylation" value="1 site, 1 O-linked glycan (1 site)"/>
</dbReference>
<dbReference type="iPTMnet" id="A0A0J9YWL9"/>
<dbReference type="PhosphoSitePlus" id="A0A0J9YWL9"/>
<dbReference type="BioMuta" id="TEX13C"/>
<dbReference type="jPOST" id="A0A0J9YWL9"/>
<dbReference type="MassIVE" id="A0A0J9YWL9"/>
<dbReference type="PeptideAtlas" id="A0A0J9YWL9"/>
<dbReference type="Antibodypedia" id="81808">
    <property type="antibodies" value="2 antibodies from 2 providers"/>
</dbReference>
<dbReference type="Ensembl" id="ENST00000632600.2">
    <property type="protein sequence ID" value="ENSP00000488022.1"/>
    <property type="gene ID" value="ENSG00000282815.2"/>
</dbReference>
<dbReference type="Ensembl" id="ENST00000695840.1">
    <property type="protein sequence ID" value="ENSP00000512212.1"/>
    <property type="gene ID" value="ENSG00000282815.2"/>
</dbReference>
<dbReference type="Ensembl" id="ENST00000695841.1">
    <property type="protein sequence ID" value="ENSP00000512213.1"/>
    <property type="gene ID" value="ENSG00000282815.2"/>
</dbReference>
<dbReference type="GeneID" id="100129520"/>
<dbReference type="KEGG" id="hsa:100129520"/>
<dbReference type="MANE-Select" id="ENST00000695840.1">
    <property type="protein sequence ID" value="ENSP00000512212.1"/>
    <property type="RefSeq nucleotide sequence ID" value="NM_001195272.2"/>
    <property type="RefSeq protein sequence ID" value="NP_001182201.1"/>
</dbReference>
<dbReference type="AGR" id="HGNC:52277"/>
<dbReference type="CTD" id="100129520"/>
<dbReference type="GeneCards" id="TEX13C"/>
<dbReference type="HGNC" id="HGNC:52277">
    <property type="gene designation" value="TEX13C"/>
</dbReference>
<dbReference type="HPA" id="ENSG00000282815">
    <property type="expression patterns" value="Tissue enriched (testis)"/>
</dbReference>
<dbReference type="MIM" id="301123">
    <property type="type" value="gene"/>
</dbReference>
<dbReference type="neXtProt" id="NX_A0A0J9YWL9"/>
<dbReference type="VEuPathDB" id="HostDB:ENSG00000282815"/>
<dbReference type="GeneTree" id="ENSGT00940000161768"/>
<dbReference type="InParanoid" id="A0A0J9YWL9"/>
<dbReference type="OMA" id="PVMPQNM"/>
<dbReference type="OrthoDB" id="9527063at2759"/>
<dbReference type="PAN-GO" id="A0A0J9YWL9">
    <property type="GO annotations" value="2 GO annotations based on evolutionary models"/>
</dbReference>
<dbReference type="BioGRID-ORCS" id="100129520">
    <property type="hits" value="7 hits in 205 CRISPR screens"/>
</dbReference>
<dbReference type="GenomeRNAi" id="100129520"/>
<dbReference type="Pharos" id="A0A0J9YWL9">
    <property type="development level" value="Tdark"/>
</dbReference>
<dbReference type="Proteomes" id="UP000005640">
    <property type="component" value="Chromosome X"/>
</dbReference>
<dbReference type="RNAct" id="A0A0J9YWL9">
    <property type="molecule type" value="protein"/>
</dbReference>
<dbReference type="Bgee" id="ENSG00000282815">
    <property type="expression patterns" value="Expressed in male germ line stem cell (sensu Vertebrata) in testis and 4 other cell types or tissues"/>
</dbReference>
<dbReference type="GO" id="GO:0003729">
    <property type="term" value="F:mRNA binding"/>
    <property type="evidence" value="ECO:0000318"/>
    <property type="project" value="GO_Central"/>
</dbReference>
<dbReference type="GO" id="GO:0008270">
    <property type="term" value="F:zinc ion binding"/>
    <property type="evidence" value="ECO:0007669"/>
    <property type="project" value="UniProtKB-KW"/>
</dbReference>
<dbReference type="InterPro" id="IPR028193">
    <property type="entry name" value="TEX13A-D_N"/>
</dbReference>
<dbReference type="InterPro" id="IPR049534">
    <property type="entry name" value="TEX13A/C/D_Znf"/>
</dbReference>
<dbReference type="InterPro" id="IPR049367">
    <property type="entry name" value="TX13C/D_rpt"/>
</dbReference>
<dbReference type="InterPro" id="IPR001876">
    <property type="entry name" value="Znf_RanBP2"/>
</dbReference>
<dbReference type="PANTHER" id="PTHR23111:SF105">
    <property type="entry name" value="TESTIS-EXPRESSED PROTEIN 13C-RELATED"/>
    <property type="match status" value="1"/>
</dbReference>
<dbReference type="PANTHER" id="PTHR23111">
    <property type="entry name" value="ZINC FINGER PROTEIN"/>
    <property type="match status" value="1"/>
</dbReference>
<dbReference type="Pfam" id="PF15186">
    <property type="entry name" value="TEX13"/>
    <property type="match status" value="1"/>
</dbReference>
<dbReference type="Pfam" id="PF20868">
    <property type="entry name" value="TX13_rpt"/>
    <property type="match status" value="11"/>
</dbReference>
<dbReference type="Pfam" id="PF20864">
    <property type="entry name" value="Zn_ribbon_TEX13"/>
    <property type="match status" value="1"/>
</dbReference>
<dbReference type="PROSITE" id="PS01358">
    <property type="entry name" value="ZF_RANBP2_1"/>
    <property type="match status" value="1"/>
</dbReference>
<proteinExistence type="evidence at protein level"/>
<evidence type="ECO:0000255" key="1">
    <source>
        <dbReference type="PROSITE-ProRule" id="PRU00322"/>
    </source>
</evidence>
<evidence type="ECO:0000256" key="2">
    <source>
        <dbReference type="SAM" id="MobiDB-lite"/>
    </source>
</evidence>
<evidence type="ECO:0000305" key="3"/>
<evidence type="ECO:0000312" key="4">
    <source>
        <dbReference type="HGNC" id="HGNC:52277"/>
    </source>
</evidence>
<gene>
    <name evidence="4" type="primary">TEX13C</name>
</gene>
<feature type="chain" id="PRO_0000435874" description="Testis-expressed protein 13C">
    <location>
        <begin position="1"/>
        <end position="993"/>
    </location>
</feature>
<feature type="zinc finger region" description="RanBP2-type" evidence="1">
    <location>
        <begin position="955"/>
        <end position="984"/>
    </location>
</feature>
<feature type="region of interest" description="Disordered" evidence="2">
    <location>
        <begin position="281"/>
        <end position="381"/>
    </location>
</feature>
<feature type="region of interest" description="Disordered" evidence="2">
    <location>
        <begin position="520"/>
        <end position="547"/>
    </location>
</feature>
<feature type="region of interest" description="Disordered" evidence="2">
    <location>
        <begin position="894"/>
        <end position="959"/>
    </location>
</feature>
<feature type="compositionally biased region" description="Polar residues" evidence="2">
    <location>
        <begin position="325"/>
        <end position="335"/>
    </location>
</feature>
<feature type="compositionally biased region" description="Basic and acidic residues" evidence="2">
    <location>
        <begin position="353"/>
        <end position="364"/>
    </location>
</feature>
<feature type="compositionally biased region" description="Polar residues" evidence="2">
    <location>
        <begin position="944"/>
        <end position="957"/>
    </location>
</feature>
<protein>
    <recommendedName>
        <fullName evidence="3">Testis-expressed protein 13C</fullName>
    </recommendedName>
</protein>
<organism>
    <name type="scientific">Homo sapiens</name>
    <name type="common">Human</name>
    <dbReference type="NCBI Taxonomy" id="9606"/>
    <lineage>
        <taxon>Eukaryota</taxon>
        <taxon>Metazoa</taxon>
        <taxon>Chordata</taxon>
        <taxon>Craniata</taxon>
        <taxon>Vertebrata</taxon>
        <taxon>Euteleostomi</taxon>
        <taxon>Mammalia</taxon>
        <taxon>Eutheria</taxon>
        <taxon>Euarchontoglires</taxon>
        <taxon>Primates</taxon>
        <taxon>Haplorrhini</taxon>
        <taxon>Catarrhini</taxon>
        <taxon>Hominidae</taxon>
        <taxon>Homo</taxon>
    </lineage>
</organism>
<comment type="similarity">
    <text>Belongs to the TEX13 family.</text>
</comment>
<accession>A0A0J9YWL9</accession>